<keyword id="KW-0067">ATP-binding</keyword>
<keyword id="KW-0436">Ligase</keyword>
<keyword id="KW-0547">Nucleotide-binding</keyword>
<keyword id="KW-0648">Protein biosynthesis</keyword>
<keyword id="KW-1185">Reference proteome</keyword>
<accession>A8M9G2</accession>
<feature type="chain" id="PRO_1000082415" description="Glutamyl-tRNA(Gln) amidotransferase subunit E">
    <location>
        <begin position="1"/>
        <end position="625"/>
    </location>
</feature>
<reference key="1">
    <citation type="submission" date="2007-10" db="EMBL/GenBank/DDBJ databases">
        <title>Complete sequence of Caldivirga maquilingensis IC-167.</title>
        <authorList>
            <consortium name="US DOE Joint Genome Institute"/>
            <person name="Copeland A."/>
            <person name="Lucas S."/>
            <person name="Lapidus A."/>
            <person name="Barry K."/>
            <person name="Glavina del Rio T."/>
            <person name="Dalin E."/>
            <person name="Tice H."/>
            <person name="Pitluck S."/>
            <person name="Saunders E."/>
            <person name="Brettin T."/>
            <person name="Bruce D."/>
            <person name="Detter J.C."/>
            <person name="Han C."/>
            <person name="Schmutz J."/>
            <person name="Larimer F."/>
            <person name="Land M."/>
            <person name="Hauser L."/>
            <person name="Kyrpides N."/>
            <person name="Ivanova N."/>
            <person name="Biddle J.F."/>
            <person name="Zhang Z."/>
            <person name="Fitz-Gibbon S.T."/>
            <person name="Lowe T.M."/>
            <person name="Saltikov C."/>
            <person name="House C.H."/>
            <person name="Richardson P."/>
        </authorList>
    </citation>
    <scope>NUCLEOTIDE SEQUENCE [LARGE SCALE GENOMIC DNA]</scope>
    <source>
        <strain>ATCC 700844 / DSM 13496 / JCM 10307 / IC-167</strain>
    </source>
</reference>
<evidence type="ECO:0000255" key="1">
    <source>
        <dbReference type="HAMAP-Rule" id="MF_00588"/>
    </source>
</evidence>
<organism>
    <name type="scientific">Caldivirga maquilingensis (strain ATCC 700844 / DSM 13496 / JCM 10307 / IC-167)</name>
    <dbReference type="NCBI Taxonomy" id="397948"/>
    <lineage>
        <taxon>Archaea</taxon>
        <taxon>Thermoproteota</taxon>
        <taxon>Thermoprotei</taxon>
        <taxon>Thermoproteales</taxon>
        <taxon>Thermoproteaceae</taxon>
        <taxon>Caldivirga</taxon>
    </lineage>
</organism>
<proteinExistence type="inferred from homology"/>
<comment type="function">
    <text evidence="1">Allows the formation of correctly charged Gln-tRNA(Gln) through the transamidation of misacylated Glu-tRNA(Gln) in organisms which lack glutaminyl-tRNA synthetase. The reaction takes place in the presence of glutamine and ATP through an activated gamma-phospho-Glu-tRNA(Gln). The GatDE system is specific for glutamate and does not act on aspartate.</text>
</comment>
<comment type="catalytic activity">
    <reaction evidence="1">
        <text>L-glutamyl-tRNA(Gln) + L-glutamine + ATP + H2O = L-glutaminyl-tRNA(Gln) + L-glutamate + ADP + phosphate + H(+)</text>
        <dbReference type="Rhea" id="RHEA:17521"/>
        <dbReference type="Rhea" id="RHEA-COMP:9681"/>
        <dbReference type="Rhea" id="RHEA-COMP:9684"/>
        <dbReference type="ChEBI" id="CHEBI:15377"/>
        <dbReference type="ChEBI" id="CHEBI:15378"/>
        <dbReference type="ChEBI" id="CHEBI:29985"/>
        <dbReference type="ChEBI" id="CHEBI:30616"/>
        <dbReference type="ChEBI" id="CHEBI:43474"/>
        <dbReference type="ChEBI" id="CHEBI:58359"/>
        <dbReference type="ChEBI" id="CHEBI:78520"/>
        <dbReference type="ChEBI" id="CHEBI:78521"/>
        <dbReference type="ChEBI" id="CHEBI:456216"/>
    </reaction>
</comment>
<comment type="subunit">
    <text evidence="1">Heterodimer of GatD and GatE.</text>
</comment>
<comment type="similarity">
    <text evidence="1">Belongs to the GatB/GatE family. GatE subfamily.</text>
</comment>
<dbReference type="EC" id="6.3.5.-" evidence="1"/>
<dbReference type="EMBL" id="CP000852">
    <property type="protein sequence ID" value="ABW02381.1"/>
    <property type="molecule type" value="Genomic_DNA"/>
</dbReference>
<dbReference type="RefSeq" id="WP_012186600.1">
    <property type="nucleotide sequence ID" value="NC_009954.1"/>
</dbReference>
<dbReference type="SMR" id="A8M9G2"/>
<dbReference type="STRING" id="397948.Cmaq_1558"/>
<dbReference type="GeneID" id="5709905"/>
<dbReference type="KEGG" id="cma:Cmaq_1558"/>
<dbReference type="eggNOG" id="arCOG01719">
    <property type="taxonomic scope" value="Archaea"/>
</dbReference>
<dbReference type="HOGENOM" id="CLU_030702_0_0_2"/>
<dbReference type="OrthoDB" id="7316at2157"/>
<dbReference type="Proteomes" id="UP000001137">
    <property type="component" value="Chromosome"/>
</dbReference>
<dbReference type="GO" id="GO:0005737">
    <property type="term" value="C:cytoplasm"/>
    <property type="evidence" value="ECO:0007669"/>
    <property type="project" value="InterPro"/>
</dbReference>
<dbReference type="GO" id="GO:0004812">
    <property type="term" value="F:aminoacyl-tRNA ligase activity"/>
    <property type="evidence" value="ECO:0007669"/>
    <property type="project" value="InterPro"/>
</dbReference>
<dbReference type="GO" id="GO:0005524">
    <property type="term" value="F:ATP binding"/>
    <property type="evidence" value="ECO:0007669"/>
    <property type="project" value="UniProtKB-KW"/>
</dbReference>
<dbReference type="GO" id="GO:0050567">
    <property type="term" value="F:glutaminyl-tRNA synthase (glutamine-hydrolyzing) activity"/>
    <property type="evidence" value="ECO:0007669"/>
    <property type="project" value="UniProtKB-UniRule"/>
</dbReference>
<dbReference type="GO" id="GO:0070681">
    <property type="term" value="P:glutaminyl-tRNAGln biosynthesis via transamidation"/>
    <property type="evidence" value="ECO:0007669"/>
    <property type="project" value="TreeGrafter"/>
</dbReference>
<dbReference type="GO" id="GO:0006412">
    <property type="term" value="P:translation"/>
    <property type="evidence" value="ECO:0007669"/>
    <property type="project" value="UniProtKB-UniRule"/>
</dbReference>
<dbReference type="Gene3D" id="1.10.10.410">
    <property type="match status" value="1"/>
</dbReference>
<dbReference type="Gene3D" id="3.30.1360.30">
    <property type="entry name" value="GAD-like domain"/>
    <property type="match status" value="1"/>
</dbReference>
<dbReference type="Gene3D" id="1.10.150.380">
    <property type="entry name" value="GatB domain, N-terminal subdomain"/>
    <property type="match status" value="1"/>
</dbReference>
<dbReference type="HAMAP" id="MF_00588">
    <property type="entry name" value="GatE"/>
    <property type="match status" value="1"/>
</dbReference>
<dbReference type="InterPro" id="IPR017959">
    <property type="entry name" value="Asn/Gln-tRNA_amidoTrfase_suB/E"/>
</dbReference>
<dbReference type="InterPro" id="IPR006075">
    <property type="entry name" value="Asn/Gln-tRNA_Trfase_suB/E_cat"/>
</dbReference>
<dbReference type="InterPro" id="IPR003789">
    <property type="entry name" value="Asn/Gln_tRNA_amidoTrase-B-like"/>
</dbReference>
<dbReference type="InterPro" id="IPR004115">
    <property type="entry name" value="GAD-like_sf"/>
</dbReference>
<dbReference type="InterPro" id="IPR029351">
    <property type="entry name" value="GAD_dom"/>
</dbReference>
<dbReference type="InterPro" id="IPR042114">
    <property type="entry name" value="GatB_C_1"/>
</dbReference>
<dbReference type="InterPro" id="IPR023168">
    <property type="entry name" value="GatB_Yqey_C_2"/>
</dbReference>
<dbReference type="InterPro" id="IPR004414">
    <property type="entry name" value="GatE"/>
</dbReference>
<dbReference type="InterPro" id="IPR017958">
    <property type="entry name" value="Gln-tRNA_amidoTrfase_suB_CS"/>
</dbReference>
<dbReference type="InterPro" id="IPR014746">
    <property type="entry name" value="Gln_synth/guanido_kin_cat_dom"/>
</dbReference>
<dbReference type="NCBIfam" id="TIGR00134">
    <property type="entry name" value="gatE_arch"/>
    <property type="match status" value="1"/>
</dbReference>
<dbReference type="NCBIfam" id="NF003107">
    <property type="entry name" value="PRK04028.1"/>
    <property type="match status" value="1"/>
</dbReference>
<dbReference type="PANTHER" id="PTHR11659">
    <property type="entry name" value="GLUTAMYL-TRNA GLN AMIDOTRANSFERASE SUBUNIT B MITOCHONDRIAL AND PROKARYOTIC PET112-RELATED"/>
    <property type="match status" value="1"/>
</dbReference>
<dbReference type="PANTHER" id="PTHR11659:SF2">
    <property type="entry name" value="GLUTAMYL-TRNA(GLN) AMIDOTRANSFERASE SUBUNIT E"/>
    <property type="match status" value="1"/>
</dbReference>
<dbReference type="Pfam" id="PF02938">
    <property type="entry name" value="GAD"/>
    <property type="match status" value="1"/>
</dbReference>
<dbReference type="Pfam" id="PF02934">
    <property type="entry name" value="GatB_N"/>
    <property type="match status" value="1"/>
</dbReference>
<dbReference type="SUPFAM" id="SSF55261">
    <property type="entry name" value="GAD domain-like"/>
    <property type="match status" value="1"/>
</dbReference>
<dbReference type="SUPFAM" id="SSF89095">
    <property type="entry name" value="GatB/YqeY motif"/>
    <property type="match status" value="1"/>
</dbReference>
<dbReference type="SUPFAM" id="SSF55931">
    <property type="entry name" value="Glutamine synthetase/guanido kinase"/>
    <property type="match status" value="1"/>
</dbReference>
<dbReference type="PROSITE" id="PS01234">
    <property type="entry name" value="GATB"/>
    <property type="match status" value="1"/>
</dbReference>
<name>GATE_CALMQ</name>
<sequence>MVKLDYRALGLKVGLEIHIQLDTGRKLFCHCKPELKNTEPDFRIIRRLRPAMSELSSIDPAALWEFRKMKTMMYEGFNDVTCLVELDEEPPHEPDEESLLLALAVSKVFNAKVFDEVYVMRKVVIDGSNVSGFQRTMVIAHDGLAEFLNYKVPIWTISLEEDAARRIEDKGDVTVYRLDRLGIPLIEVSTGPMEYPPNSIMEVAWLIGRTIMNTRRTKRGLGAIRQDLNISIAKGAKTEVKGVPELSLIPKVIEYEALRQVNLLKIKDELNNRGLSRESYTPDLIDVTSVFSSTKSSIVKRTINEGGIVAALKAPGLRGILGFELQPGRRFGSELADRVRAWTRLGGLMHSDELPGYGISKEEVAAVASRLGVDSFILLMGPQGVELQEAAKVIVDRIKEAFDGVPEETRAAKEDGTTYFMRPRPGAARMYPETDLRPIRITFELLAKADKYVPEPIDKQIERYTSMGMSRELARQLASSEYSIEAEELIKKYEDKVNPTLVASIFVNMIGGMGKNIEQLNIIQVVDKLLELYVNGRVTREAIQDTIQKYVEEGGRRGVEDIINEGGLWRMQYSEVASIVKSLINNGVKDKGKLMSIIMRDYRGRVDSRDVEKAINEFLSSEQKS</sequence>
<gene>
    <name evidence="1" type="primary">gatE</name>
    <name type="ordered locus">Cmaq_1558</name>
</gene>
<protein>
    <recommendedName>
        <fullName evidence="1">Glutamyl-tRNA(Gln) amidotransferase subunit E</fullName>
        <shortName evidence="1">Glu-ADT subunit E</shortName>
        <ecNumber evidence="1">6.3.5.-</ecNumber>
    </recommendedName>
</protein>